<protein>
    <recommendedName>
        <fullName evidence="1">Non-structural protein 1</fullName>
        <shortName evidence="1">NS1</shortName>
    </recommendedName>
    <alternativeName>
        <fullName evidence="1">NS1A</fullName>
    </alternativeName>
</protein>
<reference key="1">
    <citation type="journal article" date="2002" name="Virology">
        <title>H5N1 influenza viruses isolated from geese in Southeastern China: evidence for genetic reassortment and interspecies transmission to ducks.</title>
        <authorList>
            <person name="Guan Y."/>
            <person name="Peiris M."/>
            <person name="Kong K.F."/>
            <person name="Dyrting K.C."/>
            <person name="Ellis T.M."/>
            <person name="Sit T."/>
            <person name="Zhang L.J."/>
            <person name="Shortridge K.F."/>
        </authorList>
    </citation>
    <scope>NUCLEOTIDE SEQUENCE [GENOMIC RNA]</scope>
</reference>
<sequence length="225" mass="25630">MDSNTVSSFQVDCFLWHVRKRFADQELGDAPFLDRLRRDQKSLRGRGNTLGLDIETATRAGKQIVERILEEESDEALKMPASRYLTDMTLEEMSRDWSMLIPKQKVAGSLCIKMDQAIMDKNIILKANFSVIFDRLETLILLRAFTEEGAIVGEISPLPSLPGHTDEDVKNAIRVLIGGLEWNDNTVRVSEILQRFAWRSSDEDGRPPLPPNQKRKMARTIESEV</sequence>
<proteinExistence type="inferred from homology"/>
<organism>
    <name type="scientific">Influenza A virus (strain A/Duck/Hong Kong/2986.1/2000 H5N1 genotype C)</name>
    <dbReference type="NCBI Taxonomy" id="176674"/>
    <lineage>
        <taxon>Viruses</taxon>
        <taxon>Riboviria</taxon>
        <taxon>Orthornavirae</taxon>
        <taxon>Negarnaviricota</taxon>
        <taxon>Polyploviricotina</taxon>
        <taxon>Insthoviricetes</taxon>
        <taxon>Articulavirales</taxon>
        <taxon>Orthomyxoviridae</taxon>
        <taxon>Alphainfluenzavirus</taxon>
        <taxon>Alphainfluenzavirus influenzae</taxon>
        <taxon>Influenza A virus</taxon>
    </lineage>
</organism>
<evidence type="ECO:0000255" key="1">
    <source>
        <dbReference type="HAMAP-Rule" id="MF_04066"/>
    </source>
</evidence>
<evidence type="ECO:0000256" key="2">
    <source>
        <dbReference type="SAM" id="MobiDB-lite"/>
    </source>
</evidence>
<organismHost>
    <name type="scientific">Aves</name>
    <dbReference type="NCBI Taxonomy" id="8782"/>
</organismHost>
<organismHost>
    <name type="scientific">Felis catus</name>
    <name type="common">Cat</name>
    <name type="synonym">Felis silvestris catus</name>
    <dbReference type="NCBI Taxonomy" id="9685"/>
</organismHost>
<organismHost>
    <name type="scientific">Homo sapiens</name>
    <name type="common">Human</name>
    <dbReference type="NCBI Taxonomy" id="9606"/>
</organismHost>
<organismHost>
    <name type="scientific">Panthera pardus</name>
    <name type="common">Leopard</name>
    <name type="synonym">Felis pardus</name>
    <dbReference type="NCBI Taxonomy" id="9691"/>
</organismHost>
<organismHost>
    <name type="scientific">Panthera tigris</name>
    <name type="common">Tiger</name>
    <dbReference type="NCBI Taxonomy" id="9694"/>
</organismHost>
<organismHost>
    <name type="scientific">Sus scrofa</name>
    <name type="common">Pig</name>
    <dbReference type="NCBI Taxonomy" id="9823"/>
</organismHost>
<comment type="function">
    <text evidence="1">Inhibits post-transcriptional processing of cellular pre-mRNA, by binding and inhibiting two cellular proteins that are required for the 3'-end processing of cellular pre-mRNAs: the 30 kDa cleavage and polyadenylation specificity factor/CPSF4 and the poly(A)-binding protein 2/PABPN1. In turn, unprocessed 3' end pre-mRNAs accumulate in the host nucleus and are no longer exported to the cytoplasm. Cellular protein synthesis is thereby shut off very early after virus infection. Viral protein synthesis is not affected by the inhibition of the cellular 3' end processing machinery because the poly(A) tails of viral mRNAs are produced by the viral polymerase through a stuttering mechanism. Prevents the establishment of the cellular antiviral state by inhibiting TRIM25-mediated RIGI ubiquitination, which normally triggers the antiviral transduction signal that leads to the activation of type I IFN genes by transcription factors IRF3 and IRF7. Also binds poly(A) and U6 snRNA. Inhibits the integrated stress response (ISR) in the infected cell by blocking dsRNA binding by EIF2AK2/PKR and further phosphorylation of EIF2S1/EIF-2ALPHA. Stress granule formation is thus inhibited, which allows protein synthesis and viral replication.</text>
</comment>
<comment type="subunit">
    <text evidence="1">Homodimer. Interacts with host TRIM25 (via coiled coil); this interaction specifically inhibits TRIM25 multimerization and TRIM25-mediated RIGI CARD ubiquitination. Interacts with human EIF2AK2/PKR, CPSF4, IVNS1ABP and PABPN1.</text>
</comment>
<comment type="subcellular location">
    <subcellularLocation>
        <location evidence="1">Host nucleus</location>
    </subcellularLocation>
    <subcellularLocation>
        <location evidence="1">Host cytoplasm</location>
    </subcellularLocation>
    <text evidence="1">In uninfected, transfected cells, NS1 is localized in the nucleus. Only in virus infected cells, the nuclear export signal is unveiled, presumably by a viral protein, and a fraction of NS1 is exported in the cytoplasm.</text>
</comment>
<comment type="alternative products">
    <event type="alternative splicing"/>
    <isoform>
        <id>Q8QPI8-1</id>
        <name>NS1</name>
        <sequence type="displayed"/>
    </isoform>
    <isoform>
        <id>P0C5T7-1</id>
        <name>NEP</name>
        <name>NS2</name>
        <sequence type="external"/>
    </isoform>
</comment>
<comment type="domain">
    <text evidence="1">The dsRNA-binding region is required for suppression of RNA silencing.</text>
</comment>
<comment type="PTM">
    <text evidence="1">Upon interferon induction, ISGylated via host HERC5; this results in the impairment of NS1 interaction with RNA targets due to its inability to form homodimers and to interact with host EIF2AK2/PKR.</text>
</comment>
<comment type="similarity">
    <text evidence="1">Belongs to the influenza A viruses NS1 family.</text>
</comment>
<dbReference type="EMBL" id="AY059504">
    <property type="protein sequence ID" value="AAL31410.1"/>
    <property type="molecule type" value="Genomic_RNA"/>
</dbReference>
<dbReference type="SMR" id="Q8QPI8"/>
<dbReference type="Proteomes" id="UP000008285">
    <property type="component" value="Genome"/>
</dbReference>
<dbReference type="GO" id="GO:0030430">
    <property type="term" value="C:host cell cytoplasm"/>
    <property type="evidence" value="ECO:0007669"/>
    <property type="project" value="UniProtKB-SubCell"/>
</dbReference>
<dbReference type="GO" id="GO:0042025">
    <property type="term" value="C:host cell nucleus"/>
    <property type="evidence" value="ECO:0007669"/>
    <property type="project" value="UniProtKB-SubCell"/>
</dbReference>
<dbReference type="GO" id="GO:0030291">
    <property type="term" value="F:protein serine/threonine kinase inhibitor activity"/>
    <property type="evidence" value="ECO:0007669"/>
    <property type="project" value="UniProtKB-KW"/>
</dbReference>
<dbReference type="GO" id="GO:0003723">
    <property type="term" value="F:RNA binding"/>
    <property type="evidence" value="ECO:0007669"/>
    <property type="project" value="UniProtKB-KW"/>
</dbReference>
<dbReference type="GO" id="GO:0039540">
    <property type="term" value="P:symbiont-mediated suppression of host cytoplasmic pattern recognition receptor signaling pathway via inhibition of RIG-I activity"/>
    <property type="evidence" value="ECO:0007669"/>
    <property type="project" value="UniProtKB-KW"/>
</dbReference>
<dbReference type="GO" id="GO:0039657">
    <property type="term" value="P:symbiont-mediated suppression of host gene expression"/>
    <property type="evidence" value="ECO:0007669"/>
    <property type="project" value="UniProtKB-KW"/>
</dbReference>
<dbReference type="GO" id="GO:0039524">
    <property type="term" value="P:symbiont-mediated suppression of host mRNA processing"/>
    <property type="evidence" value="ECO:0007669"/>
    <property type="project" value="UniProtKB-KW"/>
</dbReference>
<dbReference type="GO" id="GO:0039580">
    <property type="term" value="P:symbiont-mediated suppression of host PKR/eIFalpha signaling"/>
    <property type="evidence" value="ECO:0007669"/>
    <property type="project" value="UniProtKB-KW"/>
</dbReference>
<dbReference type="GO" id="GO:0039502">
    <property type="term" value="P:symbiont-mediated suppression of host type I interferon-mediated signaling pathway"/>
    <property type="evidence" value="ECO:0007669"/>
    <property type="project" value="UniProtKB-KW"/>
</dbReference>
<dbReference type="FunFam" id="1.10.287.10:FF:000001">
    <property type="entry name" value="Non-structural protein 1"/>
    <property type="match status" value="1"/>
</dbReference>
<dbReference type="FunFam" id="3.30.420.330:FF:000001">
    <property type="entry name" value="Non-structural protein 1"/>
    <property type="match status" value="1"/>
</dbReference>
<dbReference type="Gene3D" id="3.30.420.330">
    <property type="entry name" value="Influenza virus non-structural protein, effector domain"/>
    <property type="match status" value="1"/>
</dbReference>
<dbReference type="Gene3D" id="1.10.287.10">
    <property type="entry name" value="S15/NS1, RNA-binding"/>
    <property type="match status" value="1"/>
</dbReference>
<dbReference type="HAMAP" id="MF_04066">
    <property type="entry name" value="INFV_NS1"/>
    <property type="match status" value="1"/>
</dbReference>
<dbReference type="InterPro" id="IPR004208">
    <property type="entry name" value="NS1"/>
</dbReference>
<dbReference type="InterPro" id="IPR000256">
    <property type="entry name" value="NS1A"/>
</dbReference>
<dbReference type="InterPro" id="IPR038064">
    <property type="entry name" value="NS1A_effect_dom-like_sf"/>
</dbReference>
<dbReference type="InterPro" id="IPR009068">
    <property type="entry name" value="uS15_NS1_RNA-bd_sf"/>
</dbReference>
<dbReference type="Pfam" id="PF00600">
    <property type="entry name" value="Flu_NS1"/>
    <property type="match status" value="1"/>
</dbReference>
<dbReference type="SUPFAM" id="SSF143021">
    <property type="entry name" value="Ns1 effector domain-like"/>
    <property type="match status" value="1"/>
</dbReference>
<dbReference type="SUPFAM" id="SSF47060">
    <property type="entry name" value="S15/NS1 RNA-binding domain"/>
    <property type="match status" value="1"/>
</dbReference>
<name>NS1_I00A0</name>
<accession>Q8QPI8</accession>
<gene>
    <name evidence="1" type="primary">NS</name>
</gene>
<feature type="chain" id="PRO_0000311742" description="Non-structural protein 1">
    <location>
        <begin position="1"/>
        <end position="225"/>
    </location>
</feature>
<feature type="region of interest" description="RNA-binding and homodimerization" evidence="1">
    <location>
        <begin position="1"/>
        <end position="73"/>
    </location>
</feature>
<feature type="region of interest" description="CPSF4-binding" evidence="1">
    <location>
        <begin position="175"/>
        <end position="210"/>
    </location>
</feature>
<feature type="region of interest" description="Disordered" evidence="2">
    <location>
        <begin position="201"/>
        <end position="225"/>
    </location>
</feature>
<feature type="region of interest" description="PABPN1-binding" evidence="1">
    <location>
        <begin position="218"/>
        <end position="225"/>
    </location>
</feature>
<feature type="short sequence motif" description="Nuclear localization signal" evidence="1">
    <location>
        <begin position="34"/>
        <end position="38"/>
    </location>
</feature>
<feature type="short sequence motif" description="Nuclear export signal" evidence="1">
    <location>
        <begin position="132"/>
        <end position="141"/>
    </location>
</feature>
<keyword id="KW-0025">Alternative splicing</keyword>
<keyword id="KW-1262">Eukaryotic host gene expression shutoff by virus</keyword>
<keyword id="KW-1035">Host cytoplasm</keyword>
<keyword id="KW-1190">Host gene expression shutoff by virus</keyword>
<keyword id="KW-1192">Host mRNA suppression by virus</keyword>
<keyword id="KW-1048">Host nucleus</keyword>
<keyword id="KW-0945">Host-virus interaction</keyword>
<keyword id="KW-1090">Inhibition of host innate immune response by virus</keyword>
<keyword id="KW-1114">Inhibition of host interferon signaling pathway by virus</keyword>
<keyword id="KW-1102">Inhibition of host PKR by virus</keyword>
<keyword id="KW-1103">Inhibition of host pre-mRNA processing by virus</keyword>
<keyword id="KW-1088">Inhibition of host RIG-I by virus</keyword>
<keyword id="KW-1113">Inhibition of host RLR pathway by virus</keyword>
<keyword id="KW-0922">Interferon antiviral system evasion</keyword>
<keyword id="KW-0694">RNA-binding</keyword>
<keyword id="KW-0832">Ubl conjugation</keyword>
<keyword id="KW-0899">Viral immunoevasion</keyword>